<reference key="1">
    <citation type="journal article" date="2004" name="Proc. Natl. Acad. Sci. U.S.A.">
        <title>Insights into the evolution of Yersinia pestis through whole-genome comparison with Yersinia pseudotuberculosis.</title>
        <authorList>
            <person name="Chain P.S.G."/>
            <person name="Carniel E."/>
            <person name="Larimer F.W."/>
            <person name="Lamerdin J."/>
            <person name="Stoutland P.O."/>
            <person name="Regala W.M."/>
            <person name="Georgescu A.M."/>
            <person name="Vergez L.M."/>
            <person name="Land M.L."/>
            <person name="Motin V.L."/>
            <person name="Brubaker R.R."/>
            <person name="Fowler J."/>
            <person name="Hinnebusch J."/>
            <person name="Marceau M."/>
            <person name="Medigue C."/>
            <person name="Simonet M."/>
            <person name="Chenal-Francisque V."/>
            <person name="Souza B."/>
            <person name="Dacheux D."/>
            <person name="Elliott J.M."/>
            <person name="Derbise A."/>
            <person name="Hauser L.J."/>
            <person name="Garcia E."/>
        </authorList>
    </citation>
    <scope>NUCLEOTIDE SEQUENCE [LARGE SCALE GENOMIC DNA]</scope>
    <source>
        <strain>IP32953</strain>
    </source>
</reference>
<organism>
    <name type="scientific">Yersinia pseudotuberculosis serotype I (strain IP32953)</name>
    <dbReference type="NCBI Taxonomy" id="273123"/>
    <lineage>
        <taxon>Bacteria</taxon>
        <taxon>Pseudomonadati</taxon>
        <taxon>Pseudomonadota</taxon>
        <taxon>Gammaproteobacteria</taxon>
        <taxon>Enterobacterales</taxon>
        <taxon>Yersiniaceae</taxon>
        <taxon>Yersinia</taxon>
    </lineage>
</organism>
<evidence type="ECO:0000255" key="1">
    <source>
        <dbReference type="HAMAP-Rule" id="MF_00378"/>
    </source>
</evidence>
<name>EX7L_YERPS</name>
<feature type="chain" id="PRO_0000273707" description="Exodeoxyribonuclease 7 large subunit">
    <location>
        <begin position="1"/>
        <end position="459"/>
    </location>
</feature>
<proteinExistence type="inferred from homology"/>
<dbReference type="EC" id="3.1.11.6" evidence="1"/>
<dbReference type="EMBL" id="BX936398">
    <property type="protein sequence ID" value="CAH22072.1"/>
    <property type="molecule type" value="Genomic_DNA"/>
</dbReference>
<dbReference type="RefSeq" id="WP_011192797.1">
    <property type="nucleotide sequence ID" value="NC_006155.1"/>
</dbReference>
<dbReference type="SMR" id="Q668A6"/>
<dbReference type="KEGG" id="ypo:BZ17_3796"/>
<dbReference type="KEGG" id="yps:YPTB2834"/>
<dbReference type="PATRIC" id="fig|273123.14.peg.3983"/>
<dbReference type="Proteomes" id="UP000001011">
    <property type="component" value="Chromosome"/>
</dbReference>
<dbReference type="GO" id="GO:0005737">
    <property type="term" value="C:cytoplasm"/>
    <property type="evidence" value="ECO:0007669"/>
    <property type="project" value="UniProtKB-SubCell"/>
</dbReference>
<dbReference type="GO" id="GO:0009318">
    <property type="term" value="C:exodeoxyribonuclease VII complex"/>
    <property type="evidence" value="ECO:0007669"/>
    <property type="project" value="InterPro"/>
</dbReference>
<dbReference type="GO" id="GO:0008855">
    <property type="term" value="F:exodeoxyribonuclease VII activity"/>
    <property type="evidence" value="ECO:0007669"/>
    <property type="project" value="UniProtKB-UniRule"/>
</dbReference>
<dbReference type="GO" id="GO:0003676">
    <property type="term" value="F:nucleic acid binding"/>
    <property type="evidence" value="ECO:0007669"/>
    <property type="project" value="InterPro"/>
</dbReference>
<dbReference type="GO" id="GO:0006308">
    <property type="term" value="P:DNA catabolic process"/>
    <property type="evidence" value="ECO:0007669"/>
    <property type="project" value="UniProtKB-UniRule"/>
</dbReference>
<dbReference type="CDD" id="cd04489">
    <property type="entry name" value="ExoVII_LU_OBF"/>
    <property type="match status" value="1"/>
</dbReference>
<dbReference type="HAMAP" id="MF_00378">
    <property type="entry name" value="Exonuc_7_L"/>
    <property type="match status" value="1"/>
</dbReference>
<dbReference type="InterPro" id="IPR003753">
    <property type="entry name" value="Exonuc_VII_L"/>
</dbReference>
<dbReference type="InterPro" id="IPR020579">
    <property type="entry name" value="Exonuc_VII_lsu_C"/>
</dbReference>
<dbReference type="InterPro" id="IPR025824">
    <property type="entry name" value="OB-fold_nuc-bd_dom"/>
</dbReference>
<dbReference type="NCBIfam" id="TIGR00237">
    <property type="entry name" value="xseA"/>
    <property type="match status" value="1"/>
</dbReference>
<dbReference type="PANTHER" id="PTHR30008">
    <property type="entry name" value="EXODEOXYRIBONUCLEASE 7 LARGE SUBUNIT"/>
    <property type="match status" value="1"/>
</dbReference>
<dbReference type="PANTHER" id="PTHR30008:SF0">
    <property type="entry name" value="EXODEOXYRIBONUCLEASE 7 LARGE SUBUNIT"/>
    <property type="match status" value="1"/>
</dbReference>
<dbReference type="Pfam" id="PF02601">
    <property type="entry name" value="Exonuc_VII_L"/>
    <property type="match status" value="1"/>
</dbReference>
<dbReference type="Pfam" id="PF13742">
    <property type="entry name" value="tRNA_anti_2"/>
    <property type="match status" value="1"/>
</dbReference>
<comment type="function">
    <text evidence="1">Bidirectionally degrades single-stranded DNA into large acid-insoluble oligonucleotides, which are then degraded further into small acid-soluble oligonucleotides.</text>
</comment>
<comment type="catalytic activity">
    <reaction evidence="1">
        <text>Exonucleolytic cleavage in either 5'- to 3'- or 3'- to 5'-direction to yield nucleoside 5'-phosphates.</text>
        <dbReference type="EC" id="3.1.11.6"/>
    </reaction>
</comment>
<comment type="subunit">
    <text evidence="1">Heterooligomer composed of large and small subunits.</text>
</comment>
<comment type="subcellular location">
    <subcellularLocation>
        <location evidence="1">Cytoplasm</location>
    </subcellularLocation>
</comment>
<comment type="similarity">
    <text evidence="1">Belongs to the XseA family.</text>
</comment>
<gene>
    <name evidence="1" type="primary">xseA</name>
    <name type="ordered locus">YPTB2834</name>
</gene>
<keyword id="KW-0963">Cytoplasm</keyword>
<keyword id="KW-0269">Exonuclease</keyword>
<keyword id="KW-0378">Hydrolase</keyword>
<keyword id="KW-0540">Nuclease</keyword>
<protein>
    <recommendedName>
        <fullName evidence="1">Exodeoxyribonuclease 7 large subunit</fullName>
        <ecNumber evidence="1">3.1.11.6</ecNumber>
    </recommendedName>
    <alternativeName>
        <fullName evidence="1">Exodeoxyribonuclease VII large subunit</fullName>
        <shortName evidence="1">Exonuclease VII large subunit</shortName>
    </alternativeName>
</protein>
<sequence length="459" mass="52048">MSQSSASSIFTVSRLNQTVRELLEREMGQIWLTAEISNFSQPASGHWYFTLKDDRAQVRCAMFRNSNRRTTFRPQNGQQVLVRASITLYEPRGDYQLIAESMQPAGDGLLQQQFEQLKQQLAAEGLFDQSHKQPLPSPAKQVGVITSASGAALHDVLHVLQRRDPSLPVIIYPTSVQGVDAPLQIVRAIQLANLRAECDVLIVGRGGGSLEDLWSFNDERVARAIFNSHIPIVSAVGHETDVTIADFVADLRAPTPSAAAELVSRNQIELVRQIQGQQQRMEMAMDYYLAQRNQQFTRLEHRLQQQHPHLRLARQQTLLLKLQRRLEESAQTQIRLLSKRTERLQQRLQQVQPQGQIHRYNQRVQQQEYRLRQAVERQLNGYRQRFGIACSQLEAVSPLATLARGYSVTQTPAGALLKTTKQVQAGDKLTTRLQDGWVESEITQVTVAKKSRQKKVVTQ</sequence>
<accession>Q668A6</accession>